<evidence type="ECO:0000255" key="1">
    <source>
        <dbReference type="HAMAP-Rule" id="MF_00230"/>
    </source>
</evidence>
<gene>
    <name evidence="1" type="primary">cobT</name>
    <name type="ordered locus">BF2519</name>
</gene>
<sequence>MKTFQITRPDETIREALTDKINNLTKPKGSLGTLEELALQIGLIQQTLTPELRHPQNIIFAADHGIVDEGVSLSPKEITWQQISNFLHGGAGVNFLCRQHGFELKIVDAGVDYDLPYEKGIINMKVRKSSRNYLYEAAMTEEEMNLCIERGAEVVRQCHAEGCNVLSLGEMGIGNTSSSSMWMTCFTHIPLELCVGAGSGLDNAGVRHKYNVLQQALDHYQGDGSAHDLIRYFGGLEMVMAIGAMLQAAELKMIILVDGFIMTNCILAASQLYPEVLHYAIFGHQGDEAGHKLVLDAMGAKPLLNLGLRLGEGTGAICSYPIIDSAVRMINEMDNFAHAAITKYF</sequence>
<proteinExistence type="inferred from homology"/>
<protein>
    <recommendedName>
        <fullName evidence="1">Nicotinate-nucleotide--dimethylbenzimidazole phosphoribosyltransferase</fullName>
        <shortName evidence="1">NN:DBI PRT</shortName>
        <ecNumber evidence="1">2.4.2.21</ecNumber>
    </recommendedName>
    <alternativeName>
        <fullName evidence="1">N(1)-alpha-phosphoribosyltransferase</fullName>
    </alternativeName>
</protein>
<dbReference type="EC" id="2.4.2.21" evidence="1"/>
<dbReference type="EMBL" id="CR626927">
    <property type="protein sequence ID" value="CAH08219.1"/>
    <property type="molecule type" value="Genomic_DNA"/>
</dbReference>
<dbReference type="RefSeq" id="WP_005787963.1">
    <property type="nucleotide sequence ID" value="NZ_UFTH01000001.1"/>
</dbReference>
<dbReference type="SMR" id="Q5LCE6"/>
<dbReference type="PaxDb" id="272559-BF9343_2438"/>
<dbReference type="GeneID" id="60370021"/>
<dbReference type="KEGG" id="bfs:BF9343_2438"/>
<dbReference type="eggNOG" id="COG2038">
    <property type="taxonomic scope" value="Bacteria"/>
</dbReference>
<dbReference type="HOGENOM" id="CLU_002982_0_0_10"/>
<dbReference type="UniPathway" id="UPA00061">
    <property type="reaction ID" value="UER00516"/>
</dbReference>
<dbReference type="Proteomes" id="UP000006731">
    <property type="component" value="Chromosome"/>
</dbReference>
<dbReference type="GO" id="GO:0008939">
    <property type="term" value="F:nicotinate-nucleotide-dimethylbenzimidazole phosphoribosyltransferase activity"/>
    <property type="evidence" value="ECO:0007669"/>
    <property type="project" value="UniProtKB-UniRule"/>
</dbReference>
<dbReference type="GO" id="GO:0009236">
    <property type="term" value="P:cobalamin biosynthetic process"/>
    <property type="evidence" value="ECO:0007669"/>
    <property type="project" value="UniProtKB-KW"/>
</dbReference>
<dbReference type="CDD" id="cd02439">
    <property type="entry name" value="DMB-PRT_CobT"/>
    <property type="match status" value="1"/>
</dbReference>
<dbReference type="FunFam" id="3.40.50.10210:FF:000001">
    <property type="entry name" value="Nicotinate-nucleotide--dimethylbenzimidazole phosphoribosyltransferase"/>
    <property type="match status" value="1"/>
</dbReference>
<dbReference type="Gene3D" id="1.10.1610.10">
    <property type="match status" value="1"/>
</dbReference>
<dbReference type="Gene3D" id="3.40.50.10210">
    <property type="match status" value="1"/>
</dbReference>
<dbReference type="HAMAP" id="MF_00230">
    <property type="entry name" value="CobT"/>
    <property type="match status" value="1"/>
</dbReference>
<dbReference type="InterPro" id="IPR003200">
    <property type="entry name" value="Nict_dMeBzImd_PRibTrfase"/>
</dbReference>
<dbReference type="InterPro" id="IPR017846">
    <property type="entry name" value="Nict_dMeBzImd_PRibTrfase_bact"/>
</dbReference>
<dbReference type="InterPro" id="IPR023195">
    <property type="entry name" value="Nict_dMeBzImd_PRibTrfase_N"/>
</dbReference>
<dbReference type="InterPro" id="IPR036087">
    <property type="entry name" value="Nict_dMeBzImd_PRibTrfase_sf"/>
</dbReference>
<dbReference type="NCBIfam" id="TIGR03160">
    <property type="entry name" value="cobT_DBIPRT"/>
    <property type="match status" value="1"/>
</dbReference>
<dbReference type="NCBIfam" id="NF000996">
    <property type="entry name" value="PRK00105.1"/>
    <property type="match status" value="1"/>
</dbReference>
<dbReference type="PANTHER" id="PTHR43463">
    <property type="entry name" value="NICOTINATE-NUCLEOTIDE--DIMETHYLBENZIMIDAZOLE PHOSPHORIBOSYLTRANSFERASE"/>
    <property type="match status" value="1"/>
</dbReference>
<dbReference type="PANTHER" id="PTHR43463:SF1">
    <property type="entry name" value="NICOTINATE-NUCLEOTIDE--DIMETHYLBENZIMIDAZOLE PHOSPHORIBOSYLTRANSFERASE"/>
    <property type="match status" value="1"/>
</dbReference>
<dbReference type="Pfam" id="PF02277">
    <property type="entry name" value="DBI_PRT"/>
    <property type="match status" value="1"/>
</dbReference>
<dbReference type="SUPFAM" id="SSF52733">
    <property type="entry name" value="Nicotinate mononucleotide:5,6-dimethylbenzimidazole phosphoribosyltransferase (CobT)"/>
    <property type="match status" value="1"/>
</dbReference>
<keyword id="KW-0169">Cobalamin biosynthesis</keyword>
<keyword id="KW-0328">Glycosyltransferase</keyword>
<keyword id="KW-0808">Transferase</keyword>
<name>COBT_BACFN</name>
<comment type="function">
    <text evidence="1">Catalyzes the synthesis of alpha-ribazole-5'-phosphate from nicotinate mononucleotide (NAMN) and 5,6-dimethylbenzimidazole (DMB).</text>
</comment>
<comment type="catalytic activity">
    <reaction evidence="1">
        <text>5,6-dimethylbenzimidazole + nicotinate beta-D-ribonucleotide = alpha-ribazole 5'-phosphate + nicotinate + H(+)</text>
        <dbReference type="Rhea" id="RHEA:11196"/>
        <dbReference type="ChEBI" id="CHEBI:15378"/>
        <dbReference type="ChEBI" id="CHEBI:15890"/>
        <dbReference type="ChEBI" id="CHEBI:32544"/>
        <dbReference type="ChEBI" id="CHEBI:57502"/>
        <dbReference type="ChEBI" id="CHEBI:57918"/>
        <dbReference type="EC" id="2.4.2.21"/>
    </reaction>
</comment>
<comment type="pathway">
    <text evidence="1">Nucleoside biosynthesis; alpha-ribazole biosynthesis; alpha-ribazole from 5,6-dimethylbenzimidazole: step 1/2.</text>
</comment>
<comment type="similarity">
    <text evidence="1">Belongs to the CobT family.</text>
</comment>
<reference key="1">
    <citation type="journal article" date="2005" name="Science">
        <title>Extensive DNA inversions in the B. fragilis genome control variable gene expression.</title>
        <authorList>
            <person name="Cerdeno-Tarraga A.-M."/>
            <person name="Patrick S."/>
            <person name="Crossman L.C."/>
            <person name="Blakely G."/>
            <person name="Abratt V."/>
            <person name="Lennard N."/>
            <person name="Poxton I."/>
            <person name="Duerden B."/>
            <person name="Harris B."/>
            <person name="Quail M.A."/>
            <person name="Barron A."/>
            <person name="Clark L."/>
            <person name="Corton C."/>
            <person name="Doggett J."/>
            <person name="Holden M.T.G."/>
            <person name="Larke N."/>
            <person name="Line A."/>
            <person name="Lord A."/>
            <person name="Norbertczak H."/>
            <person name="Ormond D."/>
            <person name="Price C."/>
            <person name="Rabbinowitsch E."/>
            <person name="Woodward J."/>
            <person name="Barrell B.G."/>
            <person name="Parkhill J."/>
        </authorList>
    </citation>
    <scope>NUCLEOTIDE SEQUENCE [LARGE SCALE GENOMIC DNA]</scope>
    <source>
        <strain>ATCC 25285 / DSM 2151 / CCUG 4856 / JCM 11019 / LMG 10263 / NCTC 9343 / Onslow / VPI 2553 / EN-2</strain>
    </source>
</reference>
<organism>
    <name type="scientific">Bacteroides fragilis (strain ATCC 25285 / DSM 2151 / CCUG 4856 / JCM 11019 / LMG 10263 / NCTC 9343 / Onslow / VPI 2553 / EN-2)</name>
    <dbReference type="NCBI Taxonomy" id="272559"/>
    <lineage>
        <taxon>Bacteria</taxon>
        <taxon>Pseudomonadati</taxon>
        <taxon>Bacteroidota</taxon>
        <taxon>Bacteroidia</taxon>
        <taxon>Bacteroidales</taxon>
        <taxon>Bacteroidaceae</taxon>
        <taxon>Bacteroides</taxon>
    </lineage>
</organism>
<accession>Q5LCE6</accession>
<feature type="chain" id="PRO_1000021575" description="Nicotinate-nucleotide--dimethylbenzimidazole phosphoribosyltransferase">
    <location>
        <begin position="1"/>
        <end position="345"/>
    </location>
</feature>
<feature type="active site" description="Proton acceptor" evidence="1">
    <location>
        <position position="312"/>
    </location>
</feature>